<keyword id="KW-0963">Cytoplasm</keyword>
<keyword id="KW-0488">Methylation</keyword>
<keyword id="KW-0648">Protein biosynthesis</keyword>
<accession>Q5FGZ2</accession>
<name>RF1_EHRRG</name>
<comment type="function">
    <text evidence="1">Peptide chain release factor 1 directs the termination of translation in response to the peptide chain termination codons UAG and UAA.</text>
</comment>
<comment type="subcellular location">
    <subcellularLocation>
        <location evidence="1">Cytoplasm</location>
    </subcellularLocation>
</comment>
<comment type="PTM">
    <text evidence="1">Methylated by PrmC. Methylation increases the termination efficiency of RF1.</text>
</comment>
<comment type="similarity">
    <text evidence="1">Belongs to the prokaryotic/mitochondrial release factor family.</text>
</comment>
<gene>
    <name evidence="1" type="primary">prfA</name>
    <name type="ordered locus">ERGA_CDS_04620</name>
</gene>
<evidence type="ECO:0000255" key="1">
    <source>
        <dbReference type="HAMAP-Rule" id="MF_00093"/>
    </source>
</evidence>
<sequence length="359" mass="40781">MSFDSGLEELSEKFYKLKHLLEDPSQLSVESFVNASKEYSELLPIISVIDEYNAVQKDIKDLQELINNQETDTELKNLAKEEFYELQKQLPKVKHKLKLSLLPKDKDDARNAILEIRAGTGGEEAALFVTDLYRMYIKYAEKKNWKIEQINSSSTGIGGHKEVSLCVSGSNVFAKLKFESGVHRVQRVPETEASGRLHTSAATVAVLPEIEEVDLKIDEKDLRIDVYRSSGPGGQSVNTTDSAVRITHIPSGIVVIQQDEKSQHKNKNKALKVLRARLYDLEKQKRDAEISQLRKSQIGSGDRSERIRTYNFPQSRITDHRINLTLYRLEDIMKEGDLDELIEALIAEDEANKLKNLNI</sequence>
<proteinExistence type="inferred from homology"/>
<organism>
    <name type="scientific">Ehrlichia ruminantium (strain Gardel)</name>
    <dbReference type="NCBI Taxonomy" id="302409"/>
    <lineage>
        <taxon>Bacteria</taxon>
        <taxon>Pseudomonadati</taxon>
        <taxon>Pseudomonadota</taxon>
        <taxon>Alphaproteobacteria</taxon>
        <taxon>Rickettsiales</taxon>
        <taxon>Anaplasmataceae</taxon>
        <taxon>Ehrlichia</taxon>
    </lineage>
</organism>
<reference key="1">
    <citation type="journal article" date="2006" name="J. Bacteriol.">
        <title>Comparative genomic analysis of three strains of Ehrlichia ruminantium reveals an active process of genome size plasticity.</title>
        <authorList>
            <person name="Frutos R."/>
            <person name="Viari A."/>
            <person name="Ferraz C."/>
            <person name="Morgat A."/>
            <person name="Eychenie S."/>
            <person name="Kandassamy Y."/>
            <person name="Chantal I."/>
            <person name="Bensaid A."/>
            <person name="Coissac E."/>
            <person name="Vachiery N."/>
            <person name="Demaille J."/>
            <person name="Martinez D."/>
        </authorList>
    </citation>
    <scope>NUCLEOTIDE SEQUENCE [LARGE SCALE GENOMIC DNA]</scope>
    <source>
        <strain>Gardel</strain>
    </source>
</reference>
<feature type="chain" id="PRO_0000263271" description="Peptide chain release factor 1">
    <location>
        <begin position="1"/>
        <end position="359"/>
    </location>
</feature>
<feature type="modified residue" description="N5-methylglutamine" evidence="1">
    <location>
        <position position="235"/>
    </location>
</feature>
<protein>
    <recommendedName>
        <fullName evidence="1">Peptide chain release factor 1</fullName>
        <shortName evidence="1">RF-1</shortName>
    </recommendedName>
</protein>
<dbReference type="EMBL" id="CR925677">
    <property type="protein sequence ID" value="CAI27914.1"/>
    <property type="molecule type" value="Genomic_DNA"/>
</dbReference>
<dbReference type="RefSeq" id="WP_011155131.1">
    <property type="nucleotide sequence ID" value="NC_006831.1"/>
</dbReference>
<dbReference type="SMR" id="Q5FGZ2"/>
<dbReference type="GeneID" id="33057789"/>
<dbReference type="KEGG" id="erg:ERGA_CDS_04620"/>
<dbReference type="HOGENOM" id="CLU_036856_0_1_5"/>
<dbReference type="OrthoDB" id="9806673at2"/>
<dbReference type="Proteomes" id="UP000000533">
    <property type="component" value="Chromosome"/>
</dbReference>
<dbReference type="GO" id="GO:0005737">
    <property type="term" value="C:cytoplasm"/>
    <property type="evidence" value="ECO:0007669"/>
    <property type="project" value="UniProtKB-SubCell"/>
</dbReference>
<dbReference type="GO" id="GO:0016149">
    <property type="term" value="F:translation release factor activity, codon specific"/>
    <property type="evidence" value="ECO:0007669"/>
    <property type="project" value="UniProtKB-UniRule"/>
</dbReference>
<dbReference type="FunFam" id="3.30.160.20:FF:000004">
    <property type="entry name" value="Peptide chain release factor 1"/>
    <property type="match status" value="1"/>
</dbReference>
<dbReference type="FunFam" id="3.30.70.1660:FF:000002">
    <property type="entry name" value="Peptide chain release factor 1"/>
    <property type="match status" value="1"/>
</dbReference>
<dbReference type="FunFam" id="3.30.70.1660:FF:000004">
    <property type="entry name" value="Peptide chain release factor 1"/>
    <property type="match status" value="1"/>
</dbReference>
<dbReference type="Gene3D" id="3.30.160.20">
    <property type="match status" value="1"/>
</dbReference>
<dbReference type="Gene3D" id="3.30.70.1660">
    <property type="match status" value="1"/>
</dbReference>
<dbReference type="Gene3D" id="6.10.140.1950">
    <property type="match status" value="1"/>
</dbReference>
<dbReference type="HAMAP" id="MF_00093">
    <property type="entry name" value="Rel_fac_1"/>
    <property type="match status" value="1"/>
</dbReference>
<dbReference type="InterPro" id="IPR005139">
    <property type="entry name" value="PCRF"/>
</dbReference>
<dbReference type="InterPro" id="IPR000352">
    <property type="entry name" value="Pep_chain_release_fac_I"/>
</dbReference>
<dbReference type="InterPro" id="IPR045853">
    <property type="entry name" value="Pep_chain_release_fac_I_sf"/>
</dbReference>
<dbReference type="InterPro" id="IPR050057">
    <property type="entry name" value="Prokaryotic/Mito_RF"/>
</dbReference>
<dbReference type="InterPro" id="IPR004373">
    <property type="entry name" value="RF-1"/>
</dbReference>
<dbReference type="NCBIfam" id="TIGR00019">
    <property type="entry name" value="prfA"/>
    <property type="match status" value="1"/>
</dbReference>
<dbReference type="NCBIfam" id="NF001859">
    <property type="entry name" value="PRK00591.1"/>
    <property type="match status" value="1"/>
</dbReference>
<dbReference type="PANTHER" id="PTHR43804">
    <property type="entry name" value="LD18447P"/>
    <property type="match status" value="1"/>
</dbReference>
<dbReference type="PANTHER" id="PTHR43804:SF7">
    <property type="entry name" value="LD18447P"/>
    <property type="match status" value="1"/>
</dbReference>
<dbReference type="Pfam" id="PF03462">
    <property type="entry name" value="PCRF"/>
    <property type="match status" value="1"/>
</dbReference>
<dbReference type="Pfam" id="PF00472">
    <property type="entry name" value="RF-1"/>
    <property type="match status" value="1"/>
</dbReference>
<dbReference type="SMART" id="SM00937">
    <property type="entry name" value="PCRF"/>
    <property type="match status" value="1"/>
</dbReference>
<dbReference type="SUPFAM" id="SSF75620">
    <property type="entry name" value="Release factor"/>
    <property type="match status" value="1"/>
</dbReference>
<dbReference type="PROSITE" id="PS00745">
    <property type="entry name" value="RF_PROK_I"/>
    <property type="match status" value="1"/>
</dbReference>